<comment type="similarity">
    <text evidence="1">To E.coli YnjA.</text>
</comment>
<accession>P9WLB7</accession>
<accession>L0T9G4</accession>
<accession>P64993</accession>
<accession>P71899</accession>
<proteinExistence type="evidence at protein level"/>
<name>Y2313_MYCTU</name>
<keyword id="KW-1185">Reference proteome</keyword>
<dbReference type="EMBL" id="AL123456">
    <property type="protein sequence ID" value="CCP45100.1"/>
    <property type="molecule type" value="Genomic_DNA"/>
</dbReference>
<dbReference type="PIR" id="B70703">
    <property type="entry name" value="B70703"/>
</dbReference>
<dbReference type="RefSeq" id="NP_216829.1">
    <property type="nucleotide sequence ID" value="NC_000962.3"/>
</dbReference>
<dbReference type="RefSeq" id="WP_003411924.1">
    <property type="nucleotide sequence ID" value="NZ_NVQJ01000012.1"/>
</dbReference>
<dbReference type="SMR" id="P9WLB7"/>
<dbReference type="STRING" id="83332.Rv2313c"/>
<dbReference type="PaxDb" id="83332-Rv2313c"/>
<dbReference type="DNASU" id="885268"/>
<dbReference type="GeneID" id="885268"/>
<dbReference type="KEGG" id="mtu:Rv2313c"/>
<dbReference type="KEGG" id="mtv:RVBD_2313c"/>
<dbReference type="TubercuList" id="Rv2313c"/>
<dbReference type="eggNOG" id="COG2128">
    <property type="taxonomic scope" value="Bacteria"/>
</dbReference>
<dbReference type="InParanoid" id="P9WLB7"/>
<dbReference type="OrthoDB" id="4686467at2"/>
<dbReference type="Proteomes" id="UP000001584">
    <property type="component" value="Chromosome"/>
</dbReference>
<dbReference type="Gene3D" id="1.20.1290.10">
    <property type="entry name" value="AhpD-like"/>
    <property type="match status" value="1"/>
</dbReference>
<dbReference type="InterPro" id="IPR029032">
    <property type="entry name" value="AhpD-like"/>
</dbReference>
<dbReference type="SUPFAM" id="SSF69118">
    <property type="entry name" value="AhpD-like"/>
    <property type="match status" value="1"/>
</dbReference>
<reference key="1">
    <citation type="journal article" date="1998" name="Nature">
        <title>Deciphering the biology of Mycobacterium tuberculosis from the complete genome sequence.</title>
        <authorList>
            <person name="Cole S.T."/>
            <person name="Brosch R."/>
            <person name="Parkhill J."/>
            <person name="Garnier T."/>
            <person name="Churcher C.M."/>
            <person name="Harris D.E."/>
            <person name="Gordon S.V."/>
            <person name="Eiglmeier K."/>
            <person name="Gas S."/>
            <person name="Barry C.E. III"/>
            <person name="Tekaia F."/>
            <person name="Badcock K."/>
            <person name="Basham D."/>
            <person name="Brown D."/>
            <person name="Chillingworth T."/>
            <person name="Connor R."/>
            <person name="Davies R.M."/>
            <person name="Devlin K."/>
            <person name="Feltwell T."/>
            <person name="Gentles S."/>
            <person name="Hamlin N."/>
            <person name="Holroyd S."/>
            <person name="Hornsby T."/>
            <person name="Jagels K."/>
            <person name="Krogh A."/>
            <person name="McLean J."/>
            <person name="Moule S."/>
            <person name="Murphy L.D."/>
            <person name="Oliver S."/>
            <person name="Osborne J."/>
            <person name="Quail M.A."/>
            <person name="Rajandream M.A."/>
            <person name="Rogers J."/>
            <person name="Rutter S."/>
            <person name="Seeger K."/>
            <person name="Skelton S."/>
            <person name="Squares S."/>
            <person name="Squares R."/>
            <person name="Sulston J.E."/>
            <person name="Taylor K."/>
            <person name="Whitehead S."/>
            <person name="Barrell B.G."/>
        </authorList>
    </citation>
    <scope>NUCLEOTIDE SEQUENCE [LARGE SCALE GENOMIC DNA]</scope>
    <source>
        <strain>ATCC 25618 / H37Rv</strain>
    </source>
</reference>
<reference key="2">
    <citation type="journal article" date="2011" name="Mol. Cell. Proteomics">
        <title>Proteogenomic analysis of Mycobacterium tuberculosis by high resolution mass spectrometry.</title>
        <authorList>
            <person name="Kelkar D.S."/>
            <person name="Kumar D."/>
            <person name="Kumar P."/>
            <person name="Balakrishnan L."/>
            <person name="Muthusamy B."/>
            <person name="Yadav A.K."/>
            <person name="Shrivastava P."/>
            <person name="Marimuthu A."/>
            <person name="Anand S."/>
            <person name="Sundaram H."/>
            <person name="Kingsbury R."/>
            <person name="Harsha H.C."/>
            <person name="Nair B."/>
            <person name="Prasad T.S."/>
            <person name="Chauhan D.S."/>
            <person name="Katoch K."/>
            <person name="Katoch V.M."/>
            <person name="Kumar P."/>
            <person name="Chaerkady R."/>
            <person name="Ramachandran S."/>
            <person name="Dash D."/>
            <person name="Pandey A."/>
        </authorList>
    </citation>
    <scope>IDENTIFICATION BY MASS SPECTROMETRY [LARGE SCALE ANALYSIS]</scope>
    <source>
        <strain>ATCC 25618 / H37Rv</strain>
    </source>
</reference>
<protein>
    <recommendedName>
        <fullName>Uncharacterized protein Rv2313c</fullName>
    </recommendedName>
</protein>
<organism>
    <name type="scientific">Mycobacterium tuberculosis (strain ATCC 25618 / H37Rv)</name>
    <dbReference type="NCBI Taxonomy" id="83332"/>
    <lineage>
        <taxon>Bacteria</taxon>
        <taxon>Bacillati</taxon>
        <taxon>Actinomycetota</taxon>
        <taxon>Actinomycetes</taxon>
        <taxon>Mycobacteriales</taxon>
        <taxon>Mycobacteriaceae</taxon>
        <taxon>Mycobacterium</taxon>
        <taxon>Mycobacterium tuberculosis complex</taxon>
    </lineage>
</organism>
<gene>
    <name type="ordered locus">Rv2313c</name>
    <name type="ORF">MTCY3G12.21</name>
</gene>
<sequence>MPAPVSVRDDLCRLVALSPGDGRIAGLVRQVCARALSLPSLPCEVAVNEPESPAEAVVAEFAEQFSVDVSAITGEQRSLLWTHLGEDAFGAVVAMYIADFVPRVRAGLEALGVGKEYLGWVTGPISWDHNTDLSAAVFNGFLPAVARMRALDPVTSELVRLRGAAQHNCRVCKSLREVSALDAGGSETLYGEIERFDTSVLLDVRAKAALRYADALIWTPAHLAVDVAVEVRSRFSDDEAVELTFDIMRNASNKVAVSLGADAPRVQQGTERYRIGLDGQTVFG</sequence>
<evidence type="ECO:0000305" key="1"/>
<feature type="chain" id="PRO_0000104024" description="Uncharacterized protein Rv2313c">
    <location>
        <begin position="1"/>
        <end position="284"/>
    </location>
</feature>